<proteinExistence type="inferred from homology"/>
<gene>
    <name evidence="1" type="primary">ndhK</name>
    <name type="ordered locus">SynRCC307_0214</name>
</gene>
<keyword id="KW-0004">4Fe-4S</keyword>
<keyword id="KW-0408">Iron</keyword>
<keyword id="KW-0411">Iron-sulfur</keyword>
<keyword id="KW-0472">Membrane</keyword>
<keyword id="KW-0479">Metal-binding</keyword>
<keyword id="KW-0520">NAD</keyword>
<keyword id="KW-0521">NADP</keyword>
<keyword id="KW-0618">Plastoquinone</keyword>
<keyword id="KW-0874">Quinone</keyword>
<keyword id="KW-1185">Reference proteome</keyword>
<keyword id="KW-0793">Thylakoid</keyword>
<keyword id="KW-1278">Translocase</keyword>
<keyword id="KW-0813">Transport</keyword>
<reference key="1">
    <citation type="submission" date="2006-05" db="EMBL/GenBank/DDBJ databases">
        <authorList>
            <consortium name="Genoscope"/>
        </authorList>
    </citation>
    <scope>NUCLEOTIDE SEQUENCE [LARGE SCALE GENOMIC DNA]</scope>
    <source>
        <strain>RCC307</strain>
    </source>
</reference>
<accession>A5GQF8</accession>
<evidence type="ECO:0000255" key="1">
    <source>
        <dbReference type="HAMAP-Rule" id="MF_01356"/>
    </source>
</evidence>
<feature type="chain" id="PRO_0000358497" description="NAD(P)H-quinone oxidoreductase subunit K">
    <location>
        <begin position="1"/>
        <end position="242"/>
    </location>
</feature>
<feature type="binding site" evidence="1">
    <location>
        <position position="59"/>
    </location>
    <ligand>
        <name>[4Fe-4S] cluster</name>
        <dbReference type="ChEBI" id="CHEBI:49883"/>
    </ligand>
</feature>
<feature type="binding site" evidence="1">
    <location>
        <position position="60"/>
    </location>
    <ligand>
        <name>[4Fe-4S] cluster</name>
        <dbReference type="ChEBI" id="CHEBI:49883"/>
    </ligand>
</feature>
<feature type="binding site" evidence="1">
    <location>
        <position position="124"/>
    </location>
    <ligand>
        <name>[4Fe-4S] cluster</name>
        <dbReference type="ChEBI" id="CHEBI:49883"/>
    </ligand>
</feature>
<feature type="binding site" evidence="1">
    <location>
        <position position="155"/>
    </location>
    <ligand>
        <name>[4Fe-4S] cluster</name>
        <dbReference type="ChEBI" id="CHEBI:49883"/>
    </ligand>
</feature>
<protein>
    <recommendedName>
        <fullName evidence="1">NAD(P)H-quinone oxidoreductase subunit K</fullName>
        <ecNumber evidence="1">7.1.1.-</ecNumber>
    </recommendedName>
    <alternativeName>
        <fullName evidence="1">NAD(P)H dehydrogenase I subunit K</fullName>
    </alternativeName>
    <alternativeName>
        <fullName evidence="1">NDH-1 subunit K</fullName>
        <shortName evidence="1">NDH-K</shortName>
    </alternativeName>
</protein>
<comment type="function">
    <text evidence="1">NDH-1 shuttles electrons from an unknown electron donor, via FMN and iron-sulfur (Fe-S) centers, to quinones in the respiratory and/or the photosynthetic chain. The immediate electron acceptor for the enzyme in this species is believed to be plastoquinone. Couples the redox reaction to proton translocation, and thus conserves the redox energy in a proton gradient. Cyanobacterial NDH-1 also plays a role in inorganic carbon-concentration.</text>
</comment>
<comment type="catalytic activity">
    <reaction evidence="1">
        <text>a plastoquinone + NADH + (n+1) H(+)(in) = a plastoquinol + NAD(+) + n H(+)(out)</text>
        <dbReference type="Rhea" id="RHEA:42608"/>
        <dbReference type="Rhea" id="RHEA-COMP:9561"/>
        <dbReference type="Rhea" id="RHEA-COMP:9562"/>
        <dbReference type="ChEBI" id="CHEBI:15378"/>
        <dbReference type="ChEBI" id="CHEBI:17757"/>
        <dbReference type="ChEBI" id="CHEBI:57540"/>
        <dbReference type="ChEBI" id="CHEBI:57945"/>
        <dbReference type="ChEBI" id="CHEBI:62192"/>
    </reaction>
</comment>
<comment type="catalytic activity">
    <reaction evidence="1">
        <text>a plastoquinone + NADPH + (n+1) H(+)(in) = a plastoquinol + NADP(+) + n H(+)(out)</text>
        <dbReference type="Rhea" id="RHEA:42612"/>
        <dbReference type="Rhea" id="RHEA-COMP:9561"/>
        <dbReference type="Rhea" id="RHEA-COMP:9562"/>
        <dbReference type="ChEBI" id="CHEBI:15378"/>
        <dbReference type="ChEBI" id="CHEBI:17757"/>
        <dbReference type="ChEBI" id="CHEBI:57783"/>
        <dbReference type="ChEBI" id="CHEBI:58349"/>
        <dbReference type="ChEBI" id="CHEBI:62192"/>
    </reaction>
</comment>
<comment type="cofactor">
    <cofactor evidence="1">
        <name>[4Fe-4S] cluster</name>
        <dbReference type="ChEBI" id="CHEBI:49883"/>
    </cofactor>
    <text evidence="1">Binds 1 [4Fe-4S] cluster.</text>
</comment>
<comment type="subunit">
    <text evidence="1">NDH-1 can be composed of about 15 different subunits; different subcomplexes with different compositions have been identified which probably have different functions.</text>
</comment>
<comment type="subcellular location">
    <subcellularLocation>
        <location evidence="1">Cellular thylakoid membrane</location>
        <topology evidence="1">Peripheral membrane protein</topology>
        <orientation evidence="1">Cytoplasmic side</orientation>
    </subcellularLocation>
</comment>
<comment type="similarity">
    <text evidence="1">Belongs to the complex I 20 kDa subunit family.</text>
</comment>
<dbReference type="EC" id="7.1.1.-" evidence="1"/>
<dbReference type="EMBL" id="CT978603">
    <property type="protein sequence ID" value="CAK27117.1"/>
    <property type="molecule type" value="Genomic_DNA"/>
</dbReference>
<dbReference type="SMR" id="A5GQF8"/>
<dbReference type="STRING" id="316278.SynRCC307_0214"/>
<dbReference type="KEGG" id="syr:SynRCC307_0214"/>
<dbReference type="eggNOG" id="COG0377">
    <property type="taxonomic scope" value="Bacteria"/>
</dbReference>
<dbReference type="HOGENOM" id="CLU_055737_2_0_3"/>
<dbReference type="OrthoDB" id="9786737at2"/>
<dbReference type="Proteomes" id="UP000001115">
    <property type="component" value="Chromosome"/>
</dbReference>
<dbReference type="GO" id="GO:0031676">
    <property type="term" value="C:plasma membrane-derived thylakoid membrane"/>
    <property type="evidence" value="ECO:0007669"/>
    <property type="project" value="UniProtKB-SubCell"/>
</dbReference>
<dbReference type="GO" id="GO:0045271">
    <property type="term" value="C:respiratory chain complex I"/>
    <property type="evidence" value="ECO:0007669"/>
    <property type="project" value="TreeGrafter"/>
</dbReference>
<dbReference type="GO" id="GO:0051539">
    <property type="term" value="F:4 iron, 4 sulfur cluster binding"/>
    <property type="evidence" value="ECO:0007669"/>
    <property type="project" value="UniProtKB-KW"/>
</dbReference>
<dbReference type="GO" id="GO:0005506">
    <property type="term" value="F:iron ion binding"/>
    <property type="evidence" value="ECO:0007669"/>
    <property type="project" value="UniProtKB-UniRule"/>
</dbReference>
<dbReference type="GO" id="GO:0008137">
    <property type="term" value="F:NADH dehydrogenase (ubiquinone) activity"/>
    <property type="evidence" value="ECO:0007669"/>
    <property type="project" value="InterPro"/>
</dbReference>
<dbReference type="GO" id="GO:0048038">
    <property type="term" value="F:quinone binding"/>
    <property type="evidence" value="ECO:0007669"/>
    <property type="project" value="UniProtKB-KW"/>
</dbReference>
<dbReference type="GO" id="GO:0009060">
    <property type="term" value="P:aerobic respiration"/>
    <property type="evidence" value="ECO:0007669"/>
    <property type="project" value="TreeGrafter"/>
</dbReference>
<dbReference type="GO" id="GO:0015990">
    <property type="term" value="P:electron transport coupled proton transport"/>
    <property type="evidence" value="ECO:0007669"/>
    <property type="project" value="TreeGrafter"/>
</dbReference>
<dbReference type="GO" id="GO:0019684">
    <property type="term" value="P:photosynthesis, light reaction"/>
    <property type="evidence" value="ECO:0007669"/>
    <property type="project" value="UniProtKB-UniRule"/>
</dbReference>
<dbReference type="FunFam" id="3.40.50.12280:FF:000003">
    <property type="entry name" value="NAD(P)H-quinone oxidoreductase subunit K, chloroplastic"/>
    <property type="match status" value="1"/>
</dbReference>
<dbReference type="Gene3D" id="3.40.50.12280">
    <property type="match status" value="1"/>
</dbReference>
<dbReference type="HAMAP" id="MF_01356">
    <property type="entry name" value="NDH1_NuoB"/>
    <property type="match status" value="1"/>
</dbReference>
<dbReference type="InterPro" id="IPR006137">
    <property type="entry name" value="NADH_UbQ_OxRdtase-like_20kDa"/>
</dbReference>
<dbReference type="InterPro" id="IPR006138">
    <property type="entry name" value="NADH_UQ_OxRdtase_20Kd_su"/>
</dbReference>
<dbReference type="NCBIfam" id="TIGR01957">
    <property type="entry name" value="nuoB_fam"/>
    <property type="match status" value="1"/>
</dbReference>
<dbReference type="NCBIfam" id="NF005012">
    <property type="entry name" value="PRK06411.1"/>
    <property type="match status" value="1"/>
</dbReference>
<dbReference type="PANTHER" id="PTHR11995">
    <property type="entry name" value="NADH DEHYDROGENASE"/>
    <property type="match status" value="1"/>
</dbReference>
<dbReference type="PANTHER" id="PTHR11995:SF14">
    <property type="entry name" value="NADH DEHYDROGENASE [UBIQUINONE] IRON-SULFUR PROTEIN 7, MITOCHONDRIAL"/>
    <property type="match status" value="1"/>
</dbReference>
<dbReference type="Pfam" id="PF01058">
    <property type="entry name" value="Oxidored_q6"/>
    <property type="match status" value="1"/>
</dbReference>
<dbReference type="SUPFAM" id="SSF56770">
    <property type="entry name" value="HydA/Nqo6-like"/>
    <property type="match status" value="1"/>
</dbReference>
<dbReference type="PROSITE" id="PS01150">
    <property type="entry name" value="COMPLEX1_20K"/>
    <property type="match status" value="1"/>
</dbReference>
<sequence>MSDTSLDSMRDLRAASCGPVGSPEVTTDLSENVILTSLDDLHNWARLSSLWPLLYGTACCFIEFAALIGSRFDFDRFGLVPRSSPRQADLLIVAGTVTMKMAPALVRLYEQMPEPKYVIAMGACTITGGMFSADSTTAVRGVDKLIPVDLYLPGCPPRPEAIFDAVIKLRKKVGDEAIAERGKLEQTHRYSTVEHRMTAVDPIVDGRYLRAETQQKALAAAEAVSPLNLAPAEQPETIPAKS</sequence>
<name>NDHK_SYNR3</name>
<organism>
    <name type="scientific">Synechococcus sp. (strain RCC307)</name>
    <dbReference type="NCBI Taxonomy" id="316278"/>
    <lineage>
        <taxon>Bacteria</taxon>
        <taxon>Bacillati</taxon>
        <taxon>Cyanobacteriota</taxon>
        <taxon>Cyanophyceae</taxon>
        <taxon>Synechococcales</taxon>
        <taxon>Synechococcaceae</taxon>
        <taxon>Synechococcus</taxon>
    </lineage>
</organism>